<name>FOLD_EHRCJ</name>
<keyword id="KW-0028">Amino-acid biosynthesis</keyword>
<keyword id="KW-0368">Histidine biosynthesis</keyword>
<keyword id="KW-0378">Hydrolase</keyword>
<keyword id="KW-0486">Methionine biosynthesis</keyword>
<keyword id="KW-0511">Multifunctional enzyme</keyword>
<keyword id="KW-0521">NADP</keyword>
<keyword id="KW-0554">One-carbon metabolism</keyword>
<keyword id="KW-0560">Oxidoreductase</keyword>
<keyword id="KW-0658">Purine biosynthesis</keyword>
<dbReference type="EC" id="1.5.1.5" evidence="1"/>
<dbReference type="EC" id="3.5.4.9" evidence="1"/>
<dbReference type="EMBL" id="CP000107">
    <property type="protein sequence ID" value="AAZ68712.1"/>
    <property type="molecule type" value="Genomic_DNA"/>
</dbReference>
<dbReference type="RefSeq" id="WP_011304789.1">
    <property type="nucleotide sequence ID" value="NC_007354.1"/>
</dbReference>
<dbReference type="SMR" id="Q3YRE3"/>
<dbReference type="FunCoup" id="Q3YRE3">
    <property type="interactions" value="298"/>
</dbReference>
<dbReference type="STRING" id="269484.Ecaj_0680"/>
<dbReference type="KEGG" id="ecn:Ecaj_0680"/>
<dbReference type="eggNOG" id="COG0190">
    <property type="taxonomic scope" value="Bacteria"/>
</dbReference>
<dbReference type="HOGENOM" id="CLU_034045_1_2_5"/>
<dbReference type="InParanoid" id="Q3YRE3"/>
<dbReference type="UniPathway" id="UPA00193"/>
<dbReference type="Proteomes" id="UP000000435">
    <property type="component" value="Chromosome"/>
</dbReference>
<dbReference type="GO" id="GO:0005829">
    <property type="term" value="C:cytosol"/>
    <property type="evidence" value="ECO:0007669"/>
    <property type="project" value="TreeGrafter"/>
</dbReference>
<dbReference type="GO" id="GO:0004477">
    <property type="term" value="F:methenyltetrahydrofolate cyclohydrolase activity"/>
    <property type="evidence" value="ECO:0007669"/>
    <property type="project" value="UniProtKB-UniRule"/>
</dbReference>
<dbReference type="GO" id="GO:0004488">
    <property type="term" value="F:methylenetetrahydrofolate dehydrogenase (NADP+) activity"/>
    <property type="evidence" value="ECO:0007669"/>
    <property type="project" value="UniProtKB-UniRule"/>
</dbReference>
<dbReference type="GO" id="GO:0000105">
    <property type="term" value="P:L-histidine biosynthetic process"/>
    <property type="evidence" value="ECO:0007669"/>
    <property type="project" value="UniProtKB-KW"/>
</dbReference>
<dbReference type="GO" id="GO:0009086">
    <property type="term" value="P:methionine biosynthetic process"/>
    <property type="evidence" value="ECO:0007669"/>
    <property type="project" value="UniProtKB-KW"/>
</dbReference>
<dbReference type="GO" id="GO:0006164">
    <property type="term" value="P:purine nucleotide biosynthetic process"/>
    <property type="evidence" value="ECO:0007669"/>
    <property type="project" value="UniProtKB-KW"/>
</dbReference>
<dbReference type="GO" id="GO:0035999">
    <property type="term" value="P:tetrahydrofolate interconversion"/>
    <property type="evidence" value="ECO:0007669"/>
    <property type="project" value="UniProtKB-UniRule"/>
</dbReference>
<dbReference type="CDD" id="cd01080">
    <property type="entry name" value="NAD_bind_m-THF_DH_Cyclohyd"/>
    <property type="match status" value="1"/>
</dbReference>
<dbReference type="FunFam" id="3.40.50.720:FF:000006">
    <property type="entry name" value="Bifunctional protein FolD"/>
    <property type="match status" value="1"/>
</dbReference>
<dbReference type="FunFam" id="3.40.50.10860:FF:000005">
    <property type="entry name" value="C-1-tetrahydrofolate synthase, cytoplasmic, putative"/>
    <property type="match status" value="1"/>
</dbReference>
<dbReference type="Gene3D" id="3.40.50.10860">
    <property type="entry name" value="Leucine Dehydrogenase, chain A, domain 1"/>
    <property type="match status" value="1"/>
</dbReference>
<dbReference type="Gene3D" id="3.40.50.720">
    <property type="entry name" value="NAD(P)-binding Rossmann-like Domain"/>
    <property type="match status" value="1"/>
</dbReference>
<dbReference type="HAMAP" id="MF_01576">
    <property type="entry name" value="THF_DHG_CYH"/>
    <property type="match status" value="1"/>
</dbReference>
<dbReference type="InterPro" id="IPR046346">
    <property type="entry name" value="Aminoacid_DH-like_N_sf"/>
</dbReference>
<dbReference type="InterPro" id="IPR036291">
    <property type="entry name" value="NAD(P)-bd_dom_sf"/>
</dbReference>
<dbReference type="InterPro" id="IPR000672">
    <property type="entry name" value="THF_DH/CycHdrlase"/>
</dbReference>
<dbReference type="InterPro" id="IPR020630">
    <property type="entry name" value="THF_DH/CycHdrlase_cat_dom"/>
</dbReference>
<dbReference type="InterPro" id="IPR020867">
    <property type="entry name" value="THF_DH/CycHdrlase_CS"/>
</dbReference>
<dbReference type="InterPro" id="IPR020631">
    <property type="entry name" value="THF_DH/CycHdrlase_NAD-bd_dom"/>
</dbReference>
<dbReference type="NCBIfam" id="NF010784">
    <property type="entry name" value="PRK14187.1"/>
    <property type="match status" value="1"/>
</dbReference>
<dbReference type="NCBIfam" id="NF010785">
    <property type="entry name" value="PRK14188.1"/>
    <property type="match status" value="1"/>
</dbReference>
<dbReference type="PANTHER" id="PTHR48099:SF5">
    <property type="entry name" value="C-1-TETRAHYDROFOLATE SYNTHASE, CYTOPLASMIC"/>
    <property type="match status" value="1"/>
</dbReference>
<dbReference type="PANTHER" id="PTHR48099">
    <property type="entry name" value="C-1-TETRAHYDROFOLATE SYNTHASE, CYTOPLASMIC-RELATED"/>
    <property type="match status" value="1"/>
</dbReference>
<dbReference type="Pfam" id="PF00763">
    <property type="entry name" value="THF_DHG_CYH"/>
    <property type="match status" value="1"/>
</dbReference>
<dbReference type="Pfam" id="PF02882">
    <property type="entry name" value="THF_DHG_CYH_C"/>
    <property type="match status" value="1"/>
</dbReference>
<dbReference type="PRINTS" id="PR00085">
    <property type="entry name" value="THFDHDRGNASE"/>
</dbReference>
<dbReference type="SUPFAM" id="SSF53223">
    <property type="entry name" value="Aminoacid dehydrogenase-like, N-terminal domain"/>
    <property type="match status" value="1"/>
</dbReference>
<dbReference type="SUPFAM" id="SSF51735">
    <property type="entry name" value="NAD(P)-binding Rossmann-fold domains"/>
    <property type="match status" value="1"/>
</dbReference>
<dbReference type="PROSITE" id="PS00766">
    <property type="entry name" value="THF_DHG_CYH_1"/>
    <property type="match status" value="1"/>
</dbReference>
<dbReference type="PROSITE" id="PS00767">
    <property type="entry name" value="THF_DHG_CYH_2"/>
    <property type="match status" value="1"/>
</dbReference>
<sequence>MEANIINGKAIAEDITGTLATCINDLKLQYSLVPCLIVVLVGDDPASHLYVRNKQRKAEMLGLRSETILLPSTTSESSLIDKIHELNNDDNVHGILVQLPVPKHIDKNLIINTIDPRKDVDGFHNDNVGRLFTGQKRNCLIPCTPRGCLYLIKTVTHNLSGSDAVVIGRSNIVGKPMACLLLGENCTVTTVHSATRNLSDYCSKADILVAAVGIPNFVKSSWIKPGAIVIDVGINSVEEDGVKKFVGDVNFAEAKNVASAITPVPGGVGPMTIAFLMVNTVMAACNQSGIENFVEKYLDL</sequence>
<organism>
    <name type="scientific">Ehrlichia canis (strain Jake)</name>
    <dbReference type="NCBI Taxonomy" id="269484"/>
    <lineage>
        <taxon>Bacteria</taxon>
        <taxon>Pseudomonadati</taxon>
        <taxon>Pseudomonadota</taxon>
        <taxon>Alphaproteobacteria</taxon>
        <taxon>Rickettsiales</taxon>
        <taxon>Anaplasmataceae</taxon>
        <taxon>Ehrlichia</taxon>
    </lineage>
</organism>
<reference key="1">
    <citation type="journal article" date="2006" name="J. Bacteriol.">
        <title>The genome of the obligately intracellular bacterium Ehrlichia canis reveals themes of complex membrane structure and immune evasion strategies.</title>
        <authorList>
            <person name="Mavromatis K."/>
            <person name="Doyle C.K."/>
            <person name="Lykidis A."/>
            <person name="Ivanova N."/>
            <person name="Francino M.P."/>
            <person name="Chain P."/>
            <person name="Shin M."/>
            <person name="Malfatti S."/>
            <person name="Larimer F."/>
            <person name="Copeland A."/>
            <person name="Detter J.C."/>
            <person name="Land M."/>
            <person name="Richardson P.M."/>
            <person name="Yu X.J."/>
            <person name="Walker D.H."/>
            <person name="McBride J.W."/>
            <person name="Kyrpides N.C."/>
        </authorList>
    </citation>
    <scope>NUCLEOTIDE SEQUENCE [LARGE SCALE GENOMIC DNA]</scope>
    <source>
        <strain>Jake</strain>
    </source>
</reference>
<gene>
    <name evidence="1" type="primary">folD</name>
    <name type="ordered locus">Ecaj_0680</name>
</gene>
<comment type="function">
    <text evidence="1">Catalyzes the oxidation of 5,10-methylenetetrahydrofolate to 5,10-methenyltetrahydrofolate and then the hydrolysis of 5,10-methenyltetrahydrofolate to 10-formyltetrahydrofolate.</text>
</comment>
<comment type="catalytic activity">
    <reaction evidence="1">
        <text>(6R)-5,10-methylene-5,6,7,8-tetrahydrofolate + NADP(+) = (6R)-5,10-methenyltetrahydrofolate + NADPH</text>
        <dbReference type="Rhea" id="RHEA:22812"/>
        <dbReference type="ChEBI" id="CHEBI:15636"/>
        <dbReference type="ChEBI" id="CHEBI:57455"/>
        <dbReference type="ChEBI" id="CHEBI:57783"/>
        <dbReference type="ChEBI" id="CHEBI:58349"/>
        <dbReference type="EC" id="1.5.1.5"/>
    </reaction>
</comment>
<comment type="catalytic activity">
    <reaction evidence="1">
        <text>(6R)-5,10-methenyltetrahydrofolate + H2O = (6R)-10-formyltetrahydrofolate + H(+)</text>
        <dbReference type="Rhea" id="RHEA:23700"/>
        <dbReference type="ChEBI" id="CHEBI:15377"/>
        <dbReference type="ChEBI" id="CHEBI:15378"/>
        <dbReference type="ChEBI" id="CHEBI:57455"/>
        <dbReference type="ChEBI" id="CHEBI:195366"/>
        <dbReference type="EC" id="3.5.4.9"/>
    </reaction>
</comment>
<comment type="pathway">
    <text evidence="1">One-carbon metabolism; tetrahydrofolate interconversion.</text>
</comment>
<comment type="subunit">
    <text evidence="1">Homodimer.</text>
</comment>
<comment type="similarity">
    <text evidence="1">Belongs to the tetrahydrofolate dehydrogenase/cyclohydrolase family.</text>
</comment>
<protein>
    <recommendedName>
        <fullName evidence="1">Bifunctional protein FolD</fullName>
    </recommendedName>
    <domain>
        <recommendedName>
            <fullName evidence="1">Methylenetetrahydrofolate dehydrogenase</fullName>
            <ecNumber evidence="1">1.5.1.5</ecNumber>
        </recommendedName>
    </domain>
    <domain>
        <recommendedName>
            <fullName evidence="1">Methenyltetrahydrofolate cyclohydrolase</fullName>
            <ecNumber evidence="1">3.5.4.9</ecNumber>
        </recommendedName>
    </domain>
</protein>
<proteinExistence type="inferred from homology"/>
<feature type="chain" id="PRO_0000268340" description="Bifunctional protein FolD">
    <location>
        <begin position="1"/>
        <end position="300"/>
    </location>
</feature>
<feature type="binding site" evidence="1">
    <location>
        <begin position="168"/>
        <end position="170"/>
    </location>
    <ligand>
        <name>NADP(+)</name>
        <dbReference type="ChEBI" id="CHEBI:58349"/>
    </ligand>
</feature>
<feature type="binding site" evidence="1">
    <location>
        <position position="193"/>
    </location>
    <ligand>
        <name>NADP(+)</name>
        <dbReference type="ChEBI" id="CHEBI:58349"/>
    </ligand>
</feature>
<feature type="binding site" evidence="1">
    <location>
        <position position="234"/>
    </location>
    <ligand>
        <name>NADP(+)</name>
        <dbReference type="ChEBI" id="CHEBI:58349"/>
    </ligand>
</feature>
<accession>Q3YRE3</accession>
<evidence type="ECO:0000255" key="1">
    <source>
        <dbReference type="HAMAP-Rule" id="MF_01576"/>
    </source>
</evidence>